<comment type="function">
    <text evidence="1">Catalyzes the oxidation of 5,10-methylenetetrahydrofolate to 5,10-methenyltetrahydrofolate and then the hydrolysis of 5,10-methenyltetrahydrofolate to 10-formyltetrahydrofolate.</text>
</comment>
<comment type="catalytic activity">
    <reaction evidence="1">
        <text>(6R)-5,10-methylene-5,6,7,8-tetrahydrofolate + NADP(+) = (6R)-5,10-methenyltetrahydrofolate + NADPH</text>
        <dbReference type="Rhea" id="RHEA:22812"/>
        <dbReference type="ChEBI" id="CHEBI:15636"/>
        <dbReference type="ChEBI" id="CHEBI:57455"/>
        <dbReference type="ChEBI" id="CHEBI:57783"/>
        <dbReference type="ChEBI" id="CHEBI:58349"/>
        <dbReference type="EC" id="1.5.1.5"/>
    </reaction>
</comment>
<comment type="catalytic activity">
    <reaction evidence="1">
        <text>(6R)-5,10-methenyltetrahydrofolate + H2O = (6R)-10-formyltetrahydrofolate + H(+)</text>
        <dbReference type="Rhea" id="RHEA:23700"/>
        <dbReference type="ChEBI" id="CHEBI:15377"/>
        <dbReference type="ChEBI" id="CHEBI:15378"/>
        <dbReference type="ChEBI" id="CHEBI:57455"/>
        <dbReference type="ChEBI" id="CHEBI:195366"/>
        <dbReference type="EC" id="3.5.4.9"/>
    </reaction>
</comment>
<comment type="pathway">
    <text evidence="1">One-carbon metabolism; tetrahydrofolate interconversion.</text>
</comment>
<comment type="subunit">
    <text evidence="1">Homodimer.</text>
</comment>
<comment type="similarity">
    <text evidence="1">Belongs to the tetrahydrofolate dehydrogenase/cyclohydrolase family.</text>
</comment>
<gene>
    <name evidence="1" type="primary">folD</name>
    <name type="ordered locus">BH03940</name>
</gene>
<reference key="1">
    <citation type="journal article" date="2004" name="Proc. Natl. Acad. Sci. U.S.A.">
        <title>The louse-borne human pathogen Bartonella quintana is a genomic derivative of the zoonotic agent Bartonella henselae.</title>
        <authorList>
            <person name="Alsmark U.C.M."/>
            <person name="Frank A.C."/>
            <person name="Karlberg E.O."/>
            <person name="Legault B.-A."/>
            <person name="Ardell D.H."/>
            <person name="Canbaeck B."/>
            <person name="Eriksson A.-S."/>
            <person name="Naeslund A.K."/>
            <person name="Handley S.A."/>
            <person name="Huvet M."/>
            <person name="La Scola B."/>
            <person name="Holmberg M."/>
            <person name="Andersson S.G.E."/>
        </authorList>
    </citation>
    <scope>NUCLEOTIDE SEQUENCE [LARGE SCALE GENOMIC DNA]</scope>
    <source>
        <strain>ATCC 49882 / DSM 28221 / CCUG 30454 / Houston 1</strain>
    </source>
</reference>
<feature type="chain" id="PRO_0000268276" description="Bifunctional protein FolD">
    <location>
        <begin position="1"/>
        <end position="299"/>
    </location>
</feature>
<feature type="binding site" evidence="1">
    <location>
        <begin position="168"/>
        <end position="170"/>
    </location>
    <ligand>
        <name>NADP(+)</name>
        <dbReference type="ChEBI" id="CHEBI:58349"/>
    </ligand>
</feature>
<feature type="binding site" evidence="1">
    <location>
        <position position="193"/>
    </location>
    <ligand>
        <name>NADP(+)</name>
        <dbReference type="ChEBI" id="CHEBI:58349"/>
    </ligand>
</feature>
<feature type="binding site" evidence="1">
    <location>
        <position position="234"/>
    </location>
    <ligand>
        <name>NADP(+)</name>
        <dbReference type="ChEBI" id="CHEBI:58349"/>
    </ligand>
</feature>
<dbReference type="EC" id="1.5.1.5" evidence="1"/>
<dbReference type="EC" id="3.5.4.9" evidence="1"/>
<dbReference type="EMBL" id="BX897699">
    <property type="protein sequence ID" value="CAF27203.1"/>
    <property type="molecule type" value="Genomic_DNA"/>
</dbReference>
<dbReference type="RefSeq" id="WP_011180330.1">
    <property type="nucleotide sequence ID" value="NZ_LRIJ02000001.1"/>
</dbReference>
<dbReference type="SMR" id="Q6G4F1"/>
<dbReference type="PaxDb" id="283166-BH03940"/>
<dbReference type="EnsemblBacteria" id="CAF27203">
    <property type="protein sequence ID" value="CAF27203"/>
    <property type="gene ID" value="BH03940"/>
</dbReference>
<dbReference type="GeneID" id="92985051"/>
<dbReference type="KEGG" id="bhe:BH03940"/>
<dbReference type="eggNOG" id="COG0190">
    <property type="taxonomic scope" value="Bacteria"/>
</dbReference>
<dbReference type="OrthoDB" id="9803580at2"/>
<dbReference type="UniPathway" id="UPA00193"/>
<dbReference type="Proteomes" id="UP000000421">
    <property type="component" value="Chromosome"/>
</dbReference>
<dbReference type="GO" id="GO:0005829">
    <property type="term" value="C:cytosol"/>
    <property type="evidence" value="ECO:0007669"/>
    <property type="project" value="TreeGrafter"/>
</dbReference>
<dbReference type="GO" id="GO:0004477">
    <property type="term" value="F:methenyltetrahydrofolate cyclohydrolase activity"/>
    <property type="evidence" value="ECO:0007669"/>
    <property type="project" value="UniProtKB-UniRule"/>
</dbReference>
<dbReference type="GO" id="GO:0004488">
    <property type="term" value="F:methylenetetrahydrofolate dehydrogenase (NADP+) activity"/>
    <property type="evidence" value="ECO:0007669"/>
    <property type="project" value="UniProtKB-UniRule"/>
</dbReference>
<dbReference type="GO" id="GO:0000105">
    <property type="term" value="P:L-histidine biosynthetic process"/>
    <property type="evidence" value="ECO:0007669"/>
    <property type="project" value="UniProtKB-KW"/>
</dbReference>
<dbReference type="GO" id="GO:0009086">
    <property type="term" value="P:methionine biosynthetic process"/>
    <property type="evidence" value="ECO:0007669"/>
    <property type="project" value="UniProtKB-KW"/>
</dbReference>
<dbReference type="GO" id="GO:0006164">
    <property type="term" value="P:purine nucleotide biosynthetic process"/>
    <property type="evidence" value="ECO:0007669"/>
    <property type="project" value="UniProtKB-KW"/>
</dbReference>
<dbReference type="GO" id="GO:0035999">
    <property type="term" value="P:tetrahydrofolate interconversion"/>
    <property type="evidence" value="ECO:0007669"/>
    <property type="project" value="UniProtKB-UniRule"/>
</dbReference>
<dbReference type="CDD" id="cd01080">
    <property type="entry name" value="NAD_bind_m-THF_DH_Cyclohyd"/>
    <property type="match status" value="1"/>
</dbReference>
<dbReference type="FunFam" id="3.40.50.720:FF:000006">
    <property type="entry name" value="Bifunctional protein FolD"/>
    <property type="match status" value="1"/>
</dbReference>
<dbReference type="FunFam" id="3.40.50.10860:FF:000005">
    <property type="entry name" value="C-1-tetrahydrofolate synthase, cytoplasmic, putative"/>
    <property type="match status" value="1"/>
</dbReference>
<dbReference type="Gene3D" id="3.40.50.10860">
    <property type="entry name" value="Leucine Dehydrogenase, chain A, domain 1"/>
    <property type="match status" value="1"/>
</dbReference>
<dbReference type="Gene3D" id="3.40.50.720">
    <property type="entry name" value="NAD(P)-binding Rossmann-like Domain"/>
    <property type="match status" value="1"/>
</dbReference>
<dbReference type="HAMAP" id="MF_01576">
    <property type="entry name" value="THF_DHG_CYH"/>
    <property type="match status" value="1"/>
</dbReference>
<dbReference type="InterPro" id="IPR046346">
    <property type="entry name" value="Aminoacid_DH-like_N_sf"/>
</dbReference>
<dbReference type="InterPro" id="IPR036291">
    <property type="entry name" value="NAD(P)-bd_dom_sf"/>
</dbReference>
<dbReference type="InterPro" id="IPR000672">
    <property type="entry name" value="THF_DH/CycHdrlase"/>
</dbReference>
<dbReference type="InterPro" id="IPR020630">
    <property type="entry name" value="THF_DH/CycHdrlase_cat_dom"/>
</dbReference>
<dbReference type="InterPro" id="IPR020867">
    <property type="entry name" value="THF_DH/CycHdrlase_CS"/>
</dbReference>
<dbReference type="InterPro" id="IPR020631">
    <property type="entry name" value="THF_DH/CycHdrlase_NAD-bd_dom"/>
</dbReference>
<dbReference type="NCBIfam" id="NF010783">
    <property type="entry name" value="PRK14186.1"/>
    <property type="match status" value="1"/>
</dbReference>
<dbReference type="NCBIfam" id="NF010785">
    <property type="entry name" value="PRK14188.1"/>
    <property type="match status" value="1"/>
</dbReference>
<dbReference type="PANTHER" id="PTHR48099:SF5">
    <property type="entry name" value="C-1-TETRAHYDROFOLATE SYNTHASE, CYTOPLASMIC"/>
    <property type="match status" value="1"/>
</dbReference>
<dbReference type="PANTHER" id="PTHR48099">
    <property type="entry name" value="C-1-TETRAHYDROFOLATE SYNTHASE, CYTOPLASMIC-RELATED"/>
    <property type="match status" value="1"/>
</dbReference>
<dbReference type="Pfam" id="PF00763">
    <property type="entry name" value="THF_DHG_CYH"/>
    <property type="match status" value="1"/>
</dbReference>
<dbReference type="Pfam" id="PF02882">
    <property type="entry name" value="THF_DHG_CYH_C"/>
    <property type="match status" value="1"/>
</dbReference>
<dbReference type="PRINTS" id="PR00085">
    <property type="entry name" value="THFDHDRGNASE"/>
</dbReference>
<dbReference type="SUPFAM" id="SSF53223">
    <property type="entry name" value="Aminoacid dehydrogenase-like, N-terminal domain"/>
    <property type="match status" value="1"/>
</dbReference>
<dbReference type="SUPFAM" id="SSF51735">
    <property type="entry name" value="NAD(P)-binding Rossmann-fold domains"/>
    <property type="match status" value="1"/>
</dbReference>
<dbReference type="PROSITE" id="PS00766">
    <property type="entry name" value="THF_DHG_CYH_1"/>
    <property type="match status" value="1"/>
</dbReference>
<dbReference type="PROSITE" id="PS00767">
    <property type="entry name" value="THF_DHG_CYH_2"/>
    <property type="match status" value="1"/>
</dbReference>
<protein>
    <recommendedName>
        <fullName evidence="1">Bifunctional protein FolD</fullName>
    </recommendedName>
    <domain>
        <recommendedName>
            <fullName evidence="1">Methylenetetrahydrofolate dehydrogenase</fullName>
            <ecNumber evidence="1">1.5.1.5</ecNumber>
        </recommendedName>
    </domain>
    <domain>
        <recommendedName>
            <fullName evidence="1">Methenyltetrahydrofolate cyclohydrolase</fullName>
            <ecNumber evidence="1">3.5.4.9</ecNumber>
        </recommendedName>
    </domain>
</protein>
<sequence length="299" mass="32250">MNNIIDGKKLAEKIIMKVKAETTKLRNNYKIQPGIAVIIVGNDPASQVYVTSKSKKAEECGFFSIKHMISKETQEKELLHLIATLNSDPQIHGILVQLPLPDHINTNRITQAIAFQKDVDGFHYINIGKLAANALEDAIIPCTPAGAMMMIEQQCGQDLSGLDAVVVGRSNIVGKPMAALLTAANATVTIAHSRTRDLDDVCRSADILVTAIGRPQMIKKDWVKNGAIIIDVGINRIAAPEKGVGKTRLVGDVDFEEIKEKAAAITPVPGGVGPMTIAMLMVNTLKAAARLHNLPIPKF</sequence>
<proteinExistence type="inferred from homology"/>
<name>FOLD_BARHE</name>
<organism>
    <name type="scientific">Bartonella henselae (strain ATCC 49882 / DSM 28221 / CCUG 30454 / Houston 1)</name>
    <name type="common">Rochalimaea henselae</name>
    <dbReference type="NCBI Taxonomy" id="283166"/>
    <lineage>
        <taxon>Bacteria</taxon>
        <taxon>Pseudomonadati</taxon>
        <taxon>Pseudomonadota</taxon>
        <taxon>Alphaproteobacteria</taxon>
        <taxon>Hyphomicrobiales</taxon>
        <taxon>Bartonellaceae</taxon>
        <taxon>Bartonella</taxon>
    </lineage>
</organism>
<accession>Q6G4F1</accession>
<keyword id="KW-0028">Amino-acid biosynthesis</keyword>
<keyword id="KW-0368">Histidine biosynthesis</keyword>
<keyword id="KW-0378">Hydrolase</keyword>
<keyword id="KW-0486">Methionine biosynthesis</keyword>
<keyword id="KW-0511">Multifunctional enzyme</keyword>
<keyword id="KW-0521">NADP</keyword>
<keyword id="KW-0554">One-carbon metabolism</keyword>
<keyword id="KW-0560">Oxidoreductase</keyword>
<keyword id="KW-0658">Purine biosynthesis</keyword>
<evidence type="ECO:0000255" key="1">
    <source>
        <dbReference type="HAMAP-Rule" id="MF_01576"/>
    </source>
</evidence>